<name>DAPE_XANOR</name>
<keyword id="KW-0028">Amino-acid biosynthesis</keyword>
<keyword id="KW-0170">Cobalt</keyword>
<keyword id="KW-0220">Diaminopimelate biosynthesis</keyword>
<keyword id="KW-0378">Hydrolase</keyword>
<keyword id="KW-0457">Lysine biosynthesis</keyword>
<keyword id="KW-0479">Metal-binding</keyword>
<keyword id="KW-1185">Reference proteome</keyword>
<keyword id="KW-0862">Zinc</keyword>
<sequence>MNDVLDLTCDLIARASVTPEDAGCQALLAGRLTAAGFACEHLRLGEVDNLWATHGSGAPVLVLLGHTDVVPPGPREAWTSDPFDPQIRDGVLYGRGVADMKGSVAAFVVAAEQFVAAHRAHAGTLAVLLTSDEEGDAIDGVRRVANLFLERGQAIDWCITGEPSSTERLGDLLRVGRRGSLSGTLTVKGVQGHVAYPHKARNPIHLAAPALAELVARQWDDGFESFPPTSLQVSNIHAGTGANNVIPGELQVAFNLRYTPHWDAPRLEAEITALLDRHALDYALRWHRSGEPFYTPEGRLRSVAREVLGAFAGAPPEESTGGGTSDARFIAPLGAQCIEVGPVNASIHQVDEHVRVADLQALPALYRTLIERLLIE</sequence>
<evidence type="ECO:0000255" key="1">
    <source>
        <dbReference type="HAMAP-Rule" id="MF_01690"/>
    </source>
</evidence>
<evidence type="ECO:0000305" key="2"/>
<reference key="1">
    <citation type="journal article" date="2005" name="Nucleic Acids Res.">
        <title>The genome sequence of Xanthomonas oryzae pathovar oryzae KACC10331, the bacterial blight pathogen of rice.</title>
        <authorList>
            <person name="Lee B.-M."/>
            <person name="Park Y.-J."/>
            <person name="Park D.-S."/>
            <person name="Kang H.-W."/>
            <person name="Kim J.-G."/>
            <person name="Song E.-S."/>
            <person name="Park I.-C."/>
            <person name="Yoon U.-H."/>
            <person name="Hahn J.-H."/>
            <person name="Koo B.-S."/>
            <person name="Lee G.-B."/>
            <person name="Kim H."/>
            <person name="Park H.-S."/>
            <person name="Yoon K.-O."/>
            <person name="Kim J.-H."/>
            <person name="Jung C.-H."/>
            <person name="Koh N.-H."/>
            <person name="Seo J.-S."/>
            <person name="Go S.-J."/>
        </authorList>
    </citation>
    <scope>NUCLEOTIDE SEQUENCE [LARGE SCALE GENOMIC DNA]</scope>
    <source>
        <strain>KACC10331 / KXO85</strain>
    </source>
</reference>
<accession>Q5H1C8</accession>
<organism>
    <name type="scientific">Xanthomonas oryzae pv. oryzae (strain KACC10331 / KXO85)</name>
    <dbReference type="NCBI Taxonomy" id="291331"/>
    <lineage>
        <taxon>Bacteria</taxon>
        <taxon>Pseudomonadati</taxon>
        <taxon>Pseudomonadota</taxon>
        <taxon>Gammaproteobacteria</taxon>
        <taxon>Lysobacterales</taxon>
        <taxon>Lysobacteraceae</taxon>
        <taxon>Xanthomonas</taxon>
    </lineage>
</organism>
<dbReference type="EC" id="3.5.1.18" evidence="1"/>
<dbReference type="EMBL" id="AE013598">
    <property type="protein sequence ID" value="AAW75243.1"/>
    <property type="status" value="ALT_INIT"/>
    <property type="molecule type" value="Genomic_DNA"/>
</dbReference>
<dbReference type="SMR" id="Q5H1C8"/>
<dbReference type="STRING" id="291331.XOO1989"/>
<dbReference type="KEGG" id="xoo:XOO1989"/>
<dbReference type="PATRIC" id="fig|291331.8.peg.2199"/>
<dbReference type="HOGENOM" id="CLU_021802_4_0_6"/>
<dbReference type="UniPathway" id="UPA00034">
    <property type="reaction ID" value="UER00021"/>
</dbReference>
<dbReference type="Proteomes" id="UP000006735">
    <property type="component" value="Chromosome"/>
</dbReference>
<dbReference type="GO" id="GO:0008777">
    <property type="term" value="F:acetylornithine deacetylase activity"/>
    <property type="evidence" value="ECO:0007669"/>
    <property type="project" value="TreeGrafter"/>
</dbReference>
<dbReference type="GO" id="GO:0050897">
    <property type="term" value="F:cobalt ion binding"/>
    <property type="evidence" value="ECO:0007669"/>
    <property type="project" value="UniProtKB-UniRule"/>
</dbReference>
<dbReference type="GO" id="GO:0009014">
    <property type="term" value="F:succinyl-diaminopimelate desuccinylase activity"/>
    <property type="evidence" value="ECO:0007669"/>
    <property type="project" value="UniProtKB-UniRule"/>
</dbReference>
<dbReference type="GO" id="GO:0008270">
    <property type="term" value="F:zinc ion binding"/>
    <property type="evidence" value="ECO:0007669"/>
    <property type="project" value="UniProtKB-UniRule"/>
</dbReference>
<dbReference type="GO" id="GO:0019877">
    <property type="term" value="P:diaminopimelate biosynthetic process"/>
    <property type="evidence" value="ECO:0007669"/>
    <property type="project" value="UniProtKB-UniRule"/>
</dbReference>
<dbReference type="GO" id="GO:0006526">
    <property type="term" value="P:L-arginine biosynthetic process"/>
    <property type="evidence" value="ECO:0007669"/>
    <property type="project" value="TreeGrafter"/>
</dbReference>
<dbReference type="GO" id="GO:0009089">
    <property type="term" value="P:lysine biosynthetic process via diaminopimelate"/>
    <property type="evidence" value="ECO:0007669"/>
    <property type="project" value="UniProtKB-UniRule"/>
</dbReference>
<dbReference type="CDD" id="cd03891">
    <property type="entry name" value="M20_DapE_proteobac"/>
    <property type="match status" value="1"/>
</dbReference>
<dbReference type="FunFam" id="3.40.630.10:FF:000005">
    <property type="entry name" value="Succinyl-diaminopimelate desuccinylase"/>
    <property type="match status" value="1"/>
</dbReference>
<dbReference type="Gene3D" id="3.40.630.10">
    <property type="entry name" value="Zn peptidases"/>
    <property type="match status" value="2"/>
</dbReference>
<dbReference type="HAMAP" id="MF_01690">
    <property type="entry name" value="DapE"/>
    <property type="match status" value="1"/>
</dbReference>
<dbReference type="InterPro" id="IPR036264">
    <property type="entry name" value="Bact_exopeptidase_dim_dom"/>
</dbReference>
<dbReference type="InterPro" id="IPR005941">
    <property type="entry name" value="DapE_proteobac"/>
</dbReference>
<dbReference type="InterPro" id="IPR002933">
    <property type="entry name" value="Peptidase_M20"/>
</dbReference>
<dbReference type="InterPro" id="IPR011650">
    <property type="entry name" value="Peptidase_M20_dimer"/>
</dbReference>
<dbReference type="InterPro" id="IPR050072">
    <property type="entry name" value="Peptidase_M20A"/>
</dbReference>
<dbReference type="NCBIfam" id="TIGR01246">
    <property type="entry name" value="dapE_proteo"/>
    <property type="match status" value="1"/>
</dbReference>
<dbReference type="NCBIfam" id="NF009557">
    <property type="entry name" value="PRK13009.1"/>
    <property type="match status" value="1"/>
</dbReference>
<dbReference type="PANTHER" id="PTHR43808">
    <property type="entry name" value="ACETYLORNITHINE DEACETYLASE"/>
    <property type="match status" value="1"/>
</dbReference>
<dbReference type="PANTHER" id="PTHR43808:SF31">
    <property type="entry name" value="N-ACETYL-L-CITRULLINE DEACETYLASE"/>
    <property type="match status" value="1"/>
</dbReference>
<dbReference type="Pfam" id="PF07687">
    <property type="entry name" value="M20_dimer"/>
    <property type="match status" value="1"/>
</dbReference>
<dbReference type="Pfam" id="PF01546">
    <property type="entry name" value="Peptidase_M20"/>
    <property type="match status" value="1"/>
</dbReference>
<dbReference type="SUPFAM" id="SSF55031">
    <property type="entry name" value="Bacterial exopeptidase dimerisation domain"/>
    <property type="match status" value="1"/>
</dbReference>
<dbReference type="SUPFAM" id="SSF53187">
    <property type="entry name" value="Zn-dependent exopeptidases"/>
    <property type="match status" value="1"/>
</dbReference>
<gene>
    <name evidence="1" type="primary">dapE</name>
    <name type="ordered locus">XOO1989</name>
</gene>
<protein>
    <recommendedName>
        <fullName evidence="1">Succinyl-diaminopimelate desuccinylase</fullName>
        <shortName evidence="1">SDAP desuccinylase</shortName>
        <ecNumber evidence="1">3.5.1.18</ecNumber>
    </recommendedName>
    <alternativeName>
        <fullName evidence="1">N-succinyl-LL-2,6-diaminoheptanedioate amidohydrolase</fullName>
    </alternativeName>
</protein>
<comment type="function">
    <text evidence="1">Catalyzes the hydrolysis of N-succinyl-L,L-diaminopimelic acid (SDAP), forming succinate and LL-2,6-diaminopimelate (DAP), an intermediate involved in the bacterial biosynthesis of lysine and meso-diaminopimelic acid, an essential component of bacterial cell walls.</text>
</comment>
<comment type="catalytic activity">
    <reaction evidence="1">
        <text>N-succinyl-(2S,6S)-2,6-diaminopimelate + H2O = (2S,6S)-2,6-diaminopimelate + succinate</text>
        <dbReference type="Rhea" id="RHEA:22608"/>
        <dbReference type="ChEBI" id="CHEBI:15377"/>
        <dbReference type="ChEBI" id="CHEBI:30031"/>
        <dbReference type="ChEBI" id="CHEBI:57609"/>
        <dbReference type="ChEBI" id="CHEBI:58087"/>
        <dbReference type="EC" id="3.5.1.18"/>
    </reaction>
</comment>
<comment type="cofactor">
    <cofactor evidence="1">
        <name>Zn(2+)</name>
        <dbReference type="ChEBI" id="CHEBI:29105"/>
    </cofactor>
    <cofactor evidence="1">
        <name>Co(2+)</name>
        <dbReference type="ChEBI" id="CHEBI:48828"/>
    </cofactor>
    <text evidence="1">Binds 2 Zn(2+) or Co(2+) ions per subunit.</text>
</comment>
<comment type="pathway">
    <text evidence="1">Amino-acid biosynthesis; L-lysine biosynthesis via DAP pathway; LL-2,6-diaminopimelate from (S)-tetrahydrodipicolinate (succinylase route): step 3/3.</text>
</comment>
<comment type="subunit">
    <text evidence="1">Homodimer.</text>
</comment>
<comment type="similarity">
    <text evidence="1">Belongs to the peptidase M20A family. DapE subfamily.</text>
</comment>
<comment type="sequence caution" evidence="2">
    <conflict type="erroneous initiation">
        <sequence resource="EMBL-CDS" id="AAW75243"/>
    </conflict>
</comment>
<feature type="chain" id="PRO_0000375786" description="Succinyl-diaminopimelate desuccinylase">
    <location>
        <begin position="1"/>
        <end position="376"/>
    </location>
</feature>
<feature type="active site" evidence="1">
    <location>
        <position position="68"/>
    </location>
</feature>
<feature type="active site" description="Proton acceptor" evidence="1">
    <location>
        <position position="133"/>
    </location>
</feature>
<feature type="binding site" evidence="1">
    <location>
        <position position="66"/>
    </location>
    <ligand>
        <name>Zn(2+)</name>
        <dbReference type="ChEBI" id="CHEBI:29105"/>
        <label>1</label>
    </ligand>
</feature>
<feature type="binding site" evidence="1">
    <location>
        <position position="99"/>
    </location>
    <ligand>
        <name>Zn(2+)</name>
        <dbReference type="ChEBI" id="CHEBI:29105"/>
        <label>1</label>
    </ligand>
</feature>
<feature type="binding site" evidence="1">
    <location>
        <position position="99"/>
    </location>
    <ligand>
        <name>Zn(2+)</name>
        <dbReference type="ChEBI" id="CHEBI:29105"/>
        <label>2</label>
    </ligand>
</feature>
<feature type="binding site" evidence="1">
    <location>
        <position position="134"/>
    </location>
    <ligand>
        <name>Zn(2+)</name>
        <dbReference type="ChEBI" id="CHEBI:29105"/>
        <label>2</label>
    </ligand>
</feature>
<feature type="binding site" evidence="1">
    <location>
        <position position="162"/>
    </location>
    <ligand>
        <name>Zn(2+)</name>
        <dbReference type="ChEBI" id="CHEBI:29105"/>
        <label>1</label>
    </ligand>
</feature>
<feature type="binding site" evidence="1">
    <location>
        <position position="348"/>
    </location>
    <ligand>
        <name>Zn(2+)</name>
        <dbReference type="ChEBI" id="CHEBI:29105"/>
        <label>2</label>
    </ligand>
</feature>
<proteinExistence type="inferred from homology"/>